<feature type="chain" id="PRO_0000203224" description="Uncharacterized protein YKR078W">
    <location>
        <begin position="1"/>
        <end position="585"/>
    </location>
</feature>
<feature type="region of interest" description="Disordered" evidence="1">
    <location>
        <begin position="27"/>
        <end position="59"/>
    </location>
</feature>
<name>YK58_YEAST</name>
<keyword id="KW-1185">Reference proteome</keyword>
<comment type="miscellaneous">
    <text evidence="2">Present with 1270 molecules/cell in log phase SD medium.</text>
</comment>
<reference key="1">
    <citation type="journal article" date="1994" name="Nature">
        <title>Complete DNA sequence of yeast chromosome XI.</title>
        <authorList>
            <person name="Dujon B."/>
            <person name="Alexandraki D."/>
            <person name="Andre B."/>
            <person name="Ansorge W."/>
            <person name="Baladron V."/>
            <person name="Ballesta J.P.G."/>
            <person name="Banrevi A."/>
            <person name="Bolle P.-A."/>
            <person name="Bolotin-Fukuhara M."/>
            <person name="Bossier P."/>
            <person name="Bou G."/>
            <person name="Boyer J."/>
            <person name="Buitrago M.J."/>
            <person name="Cheret G."/>
            <person name="Colleaux L."/>
            <person name="Daignan-Fornier B."/>
            <person name="del Rey F."/>
            <person name="Dion C."/>
            <person name="Domdey H."/>
            <person name="Duesterhoeft A."/>
            <person name="Duesterhus S."/>
            <person name="Entian K.-D."/>
            <person name="Erfle H."/>
            <person name="Esteban P.F."/>
            <person name="Feldmann H."/>
            <person name="Fernandes L."/>
            <person name="Fobo G.M."/>
            <person name="Fritz C."/>
            <person name="Fukuhara H."/>
            <person name="Gabel C."/>
            <person name="Gaillon L."/>
            <person name="Garcia-Cantalejo J.M."/>
            <person name="Garcia-Ramirez J.J."/>
            <person name="Gent M.E."/>
            <person name="Ghazvini M."/>
            <person name="Goffeau A."/>
            <person name="Gonzalez A."/>
            <person name="Grothues D."/>
            <person name="Guerreiro P."/>
            <person name="Hegemann J.H."/>
            <person name="Hewitt N."/>
            <person name="Hilger F."/>
            <person name="Hollenberg C.P."/>
            <person name="Horaitis O."/>
            <person name="Indge K.J."/>
            <person name="Jacquier A."/>
            <person name="James C.M."/>
            <person name="Jauniaux J.-C."/>
            <person name="Jimenez A."/>
            <person name="Keuchel H."/>
            <person name="Kirchrath L."/>
            <person name="Kleine K."/>
            <person name="Koetter P."/>
            <person name="Legrain P."/>
            <person name="Liebl S."/>
            <person name="Louis E.J."/>
            <person name="Maia e Silva A."/>
            <person name="Marck C."/>
            <person name="Monnier A.-L."/>
            <person name="Moestl D."/>
            <person name="Mueller S."/>
            <person name="Obermaier B."/>
            <person name="Oliver S.G."/>
            <person name="Pallier C."/>
            <person name="Pascolo S."/>
            <person name="Pfeiffer F."/>
            <person name="Philippsen P."/>
            <person name="Planta R.J."/>
            <person name="Pohl F.M."/>
            <person name="Pohl T.M."/>
            <person name="Poehlmann R."/>
            <person name="Portetelle D."/>
            <person name="Purnelle B."/>
            <person name="Puzos V."/>
            <person name="Ramezani Rad M."/>
            <person name="Rasmussen S.W."/>
            <person name="Remacha M.A."/>
            <person name="Revuelta J.L."/>
            <person name="Richard G.-F."/>
            <person name="Rieger M."/>
            <person name="Rodrigues-Pousada C."/>
            <person name="Rose M."/>
            <person name="Rupp T."/>
            <person name="Santos M.A."/>
            <person name="Schwager C."/>
            <person name="Sensen C."/>
            <person name="Skala J."/>
            <person name="Soares H."/>
            <person name="Sor F."/>
            <person name="Stegemann J."/>
            <person name="Tettelin H."/>
            <person name="Thierry A."/>
            <person name="Tzermia M."/>
            <person name="Urrestarazu L.A."/>
            <person name="van Dyck L."/>
            <person name="van Vliet-Reedijk J.C."/>
            <person name="Valens M."/>
            <person name="Vandenbol M."/>
            <person name="Vilela C."/>
            <person name="Vissers S."/>
            <person name="von Wettstein D."/>
            <person name="Voss H."/>
            <person name="Wiemann S."/>
            <person name="Xu G."/>
            <person name="Zimmermann J."/>
            <person name="Haasemann M."/>
            <person name="Becker I."/>
            <person name="Mewes H.-W."/>
        </authorList>
    </citation>
    <scope>NUCLEOTIDE SEQUENCE [LARGE SCALE GENOMIC DNA]</scope>
    <source>
        <strain>ATCC 204508 / S288c</strain>
    </source>
</reference>
<reference key="2">
    <citation type="journal article" date="2014" name="G3 (Bethesda)">
        <title>The reference genome sequence of Saccharomyces cerevisiae: Then and now.</title>
        <authorList>
            <person name="Engel S.R."/>
            <person name="Dietrich F.S."/>
            <person name="Fisk D.G."/>
            <person name="Binkley G."/>
            <person name="Balakrishnan R."/>
            <person name="Costanzo M.C."/>
            <person name="Dwight S.S."/>
            <person name="Hitz B.C."/>
            <person name="Karra K."/>
            <person name="Nash R.S."/>
            <person name="Weng S."/>
            <person name="Wong E.D."/>
            <person name="Lloyd P."/>
            <person name="Skrzypek M.S."/>
            <person name="Miyasato S.R."/>
            <person name="Simison M."/>
            <person name="Cherry J.M."/>
        </authorList>
    </citation>
    <scope>GENOME REANNOTATION</scope>
    <source>
        <strain>ATCC 204508 / S288c</strain>
    </source>
</reference>
<reference key="3">
    <citation type="journal article" date="2003" name="Nature">
        <title>Global analysis of protein expression in yeast.</title>
        <authorList>
            <person name="Ghaemmaghami S."/>
            <person name="Huh W.-K."/>
            <person name="Bower K."/>
            <person name="Howson R.W."/>
            <person name="Belle A."/>
            <person name="Dephoure N."/>
            <person name="O'Shea E.K."/>
            <person name="Weissman J.S."/>
        </authorList>
    </citation>
    <scope>LEVEL OF PROTEIN EXPRESSION [LARGE SCALE ANALYSIS]</scope>
</reference>
<protein>
    <recommendedName>
        <fullName>Uncharacterized protein YKR078W</fullName>
    </recommendedName>
</protein>
<organism>
    <name type="scientific">Saccharomyces cerevisiae (strain ATCC 204508 / S288c)</name>
    <name type="common">Baker's yeast</name>
    <dbReference type="NCBI Taxonomy" id="559292"/>
    <lineage>
        <taxon>Eukaryota</taxon>
        <taxon>Fungi</taxon>
        <taxon>Dikarya</taxon>
        <taxon>Ascomycota</taxon>
        <taxon>Saccharomycotina</taxon>
        <taxon>Saccharomycetes</taxon>
        <taxon>Saccharomycetales</taxon>
        <taxon>Saccharomycetaceae</taxon>
        <taxon>Saccharomyces</taxon>
    </lineage>
</organism>
<dbReference type="EMBL" id="Z28303">
    <property type="protein sequence ID" value="CAA82157.1"/>
    <property type="molecule type" value="Genomic_DNA"/>
</dbReference>
<dbReference type="EMBL" id="BK006944">
    <property type="protein sequence ID" value="DAA09228.1"/>
    <property type="molecule type" value="Genomic_DNA"/>
</dbReference>
<dbReference type="PIR" id="S38155">
    <property type="entry name" value="S38155"/>
</dbReference>
<dbReference type="SMR" id="P36158"/>
<dbReference type="BioGRID" id="34209">
    <property type="interactions" value="53"/>
</dbReference>
<dbReference type="DIP" id="DIP-7328N"/>
<dbReference type="FunCoup" id="P36158">
    <property type="interactions" value="4"/>
</dbReference>
<dbReference type="MINT" id="P36158"/>
<dbReference type="STRING" id="4932.YKR078W"/>
<dbReference type="iPTMnet" id="P36158"/>
<dbReference type="PaxDb" id="4932-YKR078W"/>
<dbReference type="PeptideAtlas" id="P36158"/>
<dbReference type="EnsemblFungi" id="YKR078W_mRNA">
    <property type="protein sequence ID" value="YKR078W"/>
    <property type="gene ID" value="YKR078W"/>
</dbReference>
<dbReference type="KEGG" id="sce:YKR078W"/>
<dbReference type="AGR" id="SGD:S000001786"/>
<dbReference type="SGD" id="S000001786">
    <property type="gene designation" value="YKR078W"/>
</dbReference>
<dbReference type="VEuPathDB" id="FungiDB:YKR078W"/>
<dbReference type="eggNOG" id="KOG2273">
    <property type="taxonomic scope" value="Eukaryota"/>
</dbReference>
<dbReference type="HOGENOM" id="CLU_444920_0_0_1"/>
<dbReference type="InParanoid" id="P36158"/>
<dbReference type="OMA" id="INEFTEC"/>
<dbReference type="OrthoDB" id="271164at2759"/>
<dbReference type="BioCyc" id="YEAST:G3O-32042-MONOMER"/>
<dbReference type="BioGRID-ORCS" id="853953">
    <property type="hits" value="0 hits in 10 CRISPR screens"/>
</dbReference>
<dbReference type="PRO" id="PR:P36158"/>
<dbReference type="Proteomes" id="UP000002311">
    <property type="component" value="Chromosome XI"/>
</dbReference>
<dbReference type="RNAct" id="P36158">
    <property type="molecule type" value="protein"/>
</dbReference>
<dbReference type="GO" id="GO:0005737">
    <property type="term" value="C:cytoplasm"/>
    <property type="evidence" value="ECO:0007005"/>
    <property type="project" value="SGD"/>
</dbReference>
<dbReference type="GO" id="GO:0005829">
    <property type="term" value="C:cytosol"/>
    <property type="evidence" value="ECO:0007669"/>
    <property type="project" value="GOC"/>
</dbReference>
<dbReference type="GO" id="GO:0005768">
    <property type="term" value="C:endosome"/>
    <property type="evidence" value="ECO:0000318"/>
    <property type="project" value="GO_Central"/>
</dbReference>
<dbReference type="GO" id="GO:0005774">
    <property type="term" value="C:vacuolar membrane"/>
    <property type="evidence" value="ECO:0000314"/>
    <property type="project" value="SGD"/>
</dbReference>
<dbReference type="GO" id="GO:0035091">
    <property type="term" value="F:phosphatidylinositol binding"/>
    <property type="evidence" value="ECO:0000318"/>
    <property type="project" value="GO_Central"/>
</dbReference>
<dbReference type="GO" id="GO:0032266">
    <property type="term" value="F:phosphatidylinositol-3-phosphate binding"/>
    <property type="evidence" value="ECO:0000314"/>
    <property type="project" value="SGD"/>
</dbReference>
<dbReference type="GO" id="GO:0001786">
    <property type="term" value="F:phosphatidylserine binding"/>
    <property type="evidence" value="ECO:0000314"/>
    <property type="project" value="SGD"/>
</dbReference>
<dbReference type="GO" id="GO:0045053">
    <property type="term" value="P:protein retention in Golgi apparatus"/>
    <property type="evidence" value="ECO:0000318"/>
    <property type="project" value="GO_Central"/>
</dbReference>
<dbReference type="GO" id="GO:1903432">
    <property type="term" value="P:regulation of TORC1 signaling"/>
    <property type="evidence" value="ECO:0000315"/>
    <property type="project" value="SGD"/>
</dbReference>
<dbReference type="GO" id="GO:0042147">
    <property type="term" value="P:retrograde transport, endosome to Golgi"/>
    <property type="evidence" value="ECO:0000318"/>
    <property type="project" value="GO_Central"/>
</dbReference>
<dbReference type="CDD" id="cd07596">
    <property type="entry name" value="BAR_SNX"/>
    <property type="match status" value="1"/>
</dbReference>
<dbReference type="FunFam" id="1.20.1270.60:FF:000112">
    <property type="entry name" value="YKR078W-like protein"/>
    <property type="match status" value="1"/>
</dbReference>
<dbReference type="Gene3D" id="1.20.1270.60">
    <property type="entry name" value="Arfaptin homology (AH) domain/BAR domain"/>
    <property type="match status" value="1"/>
</dbReference>
<dbReference type="Gene3D" id="3.30.1520.10">
    <property type="entry name" value="Phox-like domain"/>
    <property type="match status" value="1"/>
</dbReference>
<dbReference type="InterPro" id="IPR027267">
    <property type="entry name" value="AH/BAR_dom_sf"/>
</dbReference>
<dbReference type="InterPro" id="IPR001683">
    <property type="entry name" value="PX_dom"/>
</dbReference>
<dbReference type="InterPro" id="IPR036871">
    <property type="entry name" value="PX_dom_sf"/>
</dbReference>
<dbReference type="InterPro" id="IPR015404">
    <property type="entry name" value="Vps5_C"/>
</dbReference>
<dbReference type="PANTHER" id="PTHR10555:SF170">
    <property type="entry name" value="FI18122P1"/>
    <property type="match status" value="1"/>
</dbReference>
<dbReference type="PANTHER" id="PTHR10555">
    <property type="entry name" value="SORTING NEXIN"/>
    <property type="match status" value="1"/>
</dbReference>
<dbReference type="Pfam" id="PF00787">
    <property type="entry name" value="PX"/>
    <property type="match status" value="1"/>
</dbReference>
<dbReference type="Pfam" id="PF09325">
    <property type="entry name" value="Vps5"/>
    <property type="match status" value="1"/>
</dbReference>
<dbReference type="SMART" id="SM00312">
    <property type="entry name" value="PX"/>
    <property type="match status" value="1"/>
</dbReference>
<dbReference type="SUPFAM" id="SSF64268">
    <property type="entry name" value="PX domain"/>
    <property type="match status" value="1"/>
</dbReference>
<sequence>MENDKASHASPSIGVNEFVVQGEISIDDSERSVKSVSVSISDDEDSKTDVQDNMATPSTRSKFQTDLAIDNRLLEKDPKYKKLFTEKRRRRRPESCINLMTKGKGTGQKDNINDQIFSLRILPGSDLNSLKDSLWIIKISTQPDVEKTIARAFSDFYWLYHQLQNNHWGKTIPPPTRSNILVEKDEFAINHLFMIRNNEKYDPIFNFKPEYIISLQLMAMIKHIFNDKVLRLDSNFIDFISWDDDLPESLQIVVDDSTFTGDKILMTSSQFRELKEFHKQSKKVESITNSHASLIPVTELTEIYISPTKLFSRKDYQRLFQPQSTDNTFNNNDPLIQEWIPKSKTLFTSLSFGSSAPTYQEASTEIQACHDWVSISKEQWKQLLYHVLQYIVDEAVKVNSVINEFTECLKQISLDEVIRANSELFLKFSKLNESFLKKFKGASRQDILKLIILFDENVRFCESFESILNQRLKLGKILSIIEVDLDKKKNFLDKLSPGNNNSNNEDLKIRTAEDEYRIVLKRYNRVKQSWEKIMEDILNERKEFEKREAAEVNSCLKSIRDLNMDEKKHYLQLWQDFVPDEHISQ</sequence>
<evidence type="ECO:0000256" key="1">
    <source>
        <dbReference type="SAM" id="MobiDB-lite"/>
    </source>
</evidence>
<evidence type="ECO:0000269" key="2">
    <source>
    </source>
</evidence>
<gene>
    <name type="ordered locus">YKR078W</name>
</gene>
<accession>P36158</accession>
<accession>D6VXD8</accession>
<proteinExistence type="evidence at protein level"/>